<accession>Q14151</accession>
<accession>B4DKG3</accession>
<accession>Q8TB13</accession>
<organism>
    <name type="scientific">Homo sapiens</name>
    <name type="common">Human</name>
    <dbReference type="NCBI Taxonomy" id="9606"/>
    <lineage>
        <taxon>Eukaryota</taxon>
        <taxon>Metazoa</taxon>
        <taxon>Chordata</taxon>
        <taxon>Craniata</taxon>
        <taxon>Vertebrata</taxon>
        <taxon>Euteleostomi</taxon>
        <taxon>Mammalia</taxon>
        <taxon>Eutheria</taxon>
        <taxon>Euarchontoglires</taxon>
        <taxon>Primates</taxon>
        <taxon>Haplorrhini</taxon>
        <taxon>Catarrhini</taxon>
        <taxon>Hominidae</taxon>
        <taxon>Homo</taxon>
    </lineage>
</organism>
<comment type="function">
    <text>Binds to scaffold/matrix attachment region (S/MAR) DNA. Can function as an estrogen receptor corepressor and can also inhibit cell proliferation.</text>
</comment>
<comment type="subunit">
    <text evidence="5">Interacts with SAFB/SAFB1 and SCAM1. Interacts with isoform 2 SRPK1 and inhibits its activity.</text>
</comment>
<comment type="interaction">
    <interactant intactId="EBI-352869">
        <id>Q14151</id>
    </interactant>
    <interactant intactId="EBI-78473">
        <id>P03372</id>
        <label>ESR1</label>
    </interactant>
    <organismsDiffer>false</organismsDiffer>
    <experiments>2</experiments>
</comment>
<comment type="interaction">
    <interactant intactId="EBI-352869">
        <id>Q14151</id>
    </interactant>
    <interactant intactId="EBI-746969">
        <id>Q9H0R8</id>
        <label>GABARAPL1</label>
    </interactant>
    <organismsDiffer>false</organismsDiffer>
    <experiments>2</experiments>
</comment>
<comment type="interaction">
    <interactant intactId="EBI-352869">
        <id>Q14151</id>
    </interactant>
    <interactant intactId="EBI-373144">
        <id>Q9GZQ8</id>
        <label>MAP1LC3B</label>
    </interactant>
    <organismsDiffer>false</organismsDiffer>
    <experiments>3</experiments>
</comment>
<comment type="interaction">
    <interactant intactId="EBI-352869">
        <id>Q14151</id>
    </interactant>
    <interactant intactId="EBI-348298">
        <id>Q15424</id>
        <label>SAFB</label>
    </interactant>
    <organismsDiffer>false</organismsDiffer>
    <experiments>3</experiments>
</comment>
<comment type="interaction">
    <interactant intactId="EBI-352869">
        <id>Q14151</id>
    </interactant>
    <interactant intactId="EBI-352869">
        <id>Q14151</id>
        <label>SAFB2</label>
    </interactant>
    <organismsDiffer>false</organismsDiffer>
    <experiments>2</experiments>
</comment>
<comment type="interaction">
    <interactant intactId="EBI-352869">
        <id>Q14151</id>
    </interactant>
    <interactant intactId="EBI-1222956">
        <id>O60504-2</id>
        <label>SORBS3</label>
    </interactant>
    <organismsDiffer>false</organismsDiffer>
    <experiments>3</experiments>
</comment>
<comment type="subcellular location">
    <subcellularLocation>
        <location>Cytoplasm</location>
    </subcellularLocation>
    <subcellularLocation>
        <location>Nucleus</location>
    </subcellularLocation>
</comment>
<comment type="alternative products">
    <event type="alternative splicing"/>
    <isoform>
        <id>Q14151-1</id>
        <name>1</name>
        <sequence type="displayed"/>
    </isoform>
    <isoform>
        <id>Q14151-2</id>
        <name>2</name>
        <sequence type="described" ref="VSP_056404 VSP_056405"/>
    </isoform>
</comment>
<comment type="tissue specificity">
    <text>Expressed at high levels in the CNS and at low levels in the liver. Expressed in a wide number of breast cancer cell lines.</text>
</comment>
<comment type="sequence caution" evidence="8">
    <conflict type="erroneous initiation">
        <sequence resource="EMBL-CDS" id="BAA09487"/>
    </conflict>
</comment>
<keyword id="KW-0007">Acetylation</keyword>
<keyword id="KW-0025">Alternative splicing</keyword>
<keyword id="KW-0963">Cytoplasm</keyword>
<keyword id="KW-0238">DNA-binding</keyword>
<keyword id="KW-1017">Isopeptide bond</keyword>
<keyword id="KW-0488">Methylation</keyword>
<keyword id="KW-0539">Nucleus</keyword>
<keyword id="KW-0597">Phosphoprotein</keyword>
<keyword id="KW-1267">Proteomics identification</keyword>
<keyword id="KW-1185">Reference proteome</keyword>
<keyword id="KW-0678">Repressor</keyword>
<keyword id="KW-0694">RNA-binding</keyword>
<keyword id="KW-0804">Transcription</keyword>
<keyword id="KW-0805">Transcription regulation</keyword>
<keyword id="KW-0832">Ubl conjugation</keyword>
<evidence type="ECO:0000255" key="1"/>
<evidence type="ECO:0000255" key="2">
    <source>
        <dbReference type="PROSITE-ProRule" id="PRU00176"/>
    </source>
</evidence>
<evidence type="ECO:0000255" key="3">
    <source>
        <dbReference type="PROSITE-ProRule" id="PRU00186"/>
    </source>
</evidence>
<evidence type="ECO:0000256" key="4">
    <source>
        <dbReference type="SAM" id="MobiDB-lite"/>
    </source>
</evidence>
<evidence type="ECO:0000269" key="5">
    <source>
    </source>
</evidence>
<evidence type="ECO:0000269" key="6">
    <source>
    </source>
</evidence>
<evidence type="ECO:0000303" key="7">
    <source>
    </source>
</evidence>
<evidence type="ECO:0000305" key="8"/>
<evidence type="ECO:0007744" key="9">
    <source>
    </source>
</evidence>
<evidence type="ECO:0007744" key="10">
    <source>
    </source>
</evidence>
<evidence type="ECO:0007744" key="11">
    <source>
    </source>
</evidence>
<evidence type="ECO:0007744" key="12">
    <source>
    </source>
</evidence>
<evidence type="ECO:0007744" key="13">
    <source>
    </source>
</evidence>
<evidence type="ECO:0007744" key="14">
    <source>
    </source>
</evidence>
<evidence type="ECO:0007744" key="15">
    <source>
    </source>
</evidence>
<evidence type="ECO:0007744" key="16">
    <source>
    </source>
</evidence>
<evidence type="ECO:0007744" key="17">
    <source>
    </source>
</evidence>
<evidence type="ECO:0007744" key="18">
    <source>
    </source>
</evidence>
<evidence type="ECO:0007744" key="19">
    <source>
    </source>
</evidence>
<evidence type="ECO:0007744" key="20">
    <source>
    </source>
</evidence>
<evidence type="ECO:0007744" key="21">
    <source>
    </source>
</evidence>
<evidence type="ECO:0007744" key="22">
    <source>
    </source>
</evidence>
<evidence type="ECO:0007744" key="23">
    <source>
    </source>
</evidence>
<evidence type="ECO:0007744" key="24">
    <source>
    </source>
</evidence>
<evidence type="ECO:0007744" key="25">
    <source>
    </source>
</evidence>
<reference key="1">
    <citation type="journal article" date="1995" name="DNA Res.">
        <title>Prediction of the coding sequences of unidentified human genes. IV. The coding sequences of 40 new genes (KIAA0121-KIAA0160) deduced by analysis of cDNA clones from human cell line KG-1.</title>
        <authorList>
            <person name="Nagase T."/>
            <person name="Seki N."/>
            <person name="Tanaka A."/>
            <person name="Ishikawa K."/>
            <person name="Nomura N."/>
        </authorList>
    </citation>
    <scope>NUCLEOTIDE SEQUENCE [LARGE SCALE MRNA] (ISOFORM 1)</scope>
    <source>
        <tissue>Bone marrow</tissue>
    </source>
</reference>
<reference key="2">
    <citation type="journal article" date="2004" name="Nat. Genet.">
        <title>Complete sequencing and characterization of 21,243 full-length human cDNAs.</title>
        <authorList>
            <person name="Ota T."/>
            <person name="Suzuki Y."/>
            <person name="Nishikawa T."/>
            <person name="Otsuki T."/>
            <person name="Sugiyama T."/>
            <person name="Irie R."/>
            <person name="Wakamatsu A."/>
            <person name="Hayashi K."/>
            <person name="Sato H."/>
            <person name="Nagai K."/>
            <person name="Kimura K."/>
            <person name="Makita H."/>
            <person name="Sekine M."/>
            <person name="Obayashi M."/>
            <person name="Nishi T."/>
            <person name="Shibahara T."/>
            <person name="Tanaka T."/>
            <person name="Ishii S."/>
            <person name="Yamamoto J."/>
            <person name="Saito K."/>
            <person name="Kawai Y."/>
            <person name="Isono Y."/>
            <person name="Nakamura Y."/>
            <person name="Nagahari K."/>
            <person name="Murakami K."/>
            <person name="Yasuda T."/>
            <person name="Iwayanagi T."/>
            <person name="Wagatsuma M."/>
            <person name="Shiratori A."/>
            <person name="Sudo H."/>
            <person name="Hosoiri T."/>
            <person name="Kaku Y."/>
            <person name="Kodaira H."/>
            <person name="Kondo H."/>
            <person name="Sugawara M."/>
            <person name="Takahashi M."/>
            <person name="Kanda K."/>
            <person name="Yokoi T."/>
            <person name="Furuya T."/>
            <person name="Kikkawa E."/>
            <person name="Omura Y."/>
            <person name="Abe K."/>
            <person name="Kamihara K."/>
            <person name="Katsuta N."/>
            <person name="Sato K."/>
            <person name="Tanikawa M."/>
            <person name="Yamazaki M."/>
            <person name="Ninomiya K."/>
            <person name="Ishibashi T."/>
            <person name="Yamashita H."/>
            <person name="Murakawa K."/>
            <person name="Fujimori K."/>
            <person name="Tanai H."/>
            <person name="Kimata M."/>
            <person name="Watanabe M."/>
            <person name="Hiraoka S."/>
            <person name="Chiba Y."/>
            <person name="Ishida S."/>
            <person name="Ono Y."/>
            <person name="Takiguchi S."/>
            <person name="Watanabe S."/>
            <person name="Yosida M."/>
            <person name="Hotuta T."/>
            <person name="Kusano J."/>
            <person name="Kanehori K."/>
            <person name="Takahashi-Fujii A."/>
            <person name="Hara H."/>
            <person name="Tanase T.-O."/>
            <person name="Nomura Y."/>
            <person name="Togiya S."/>
            <person name="Komai F."/>
            <person name="Hara R."/>
            <person name="Takeuchi K."/>
            <person name="Arita M."/>
            <person name="Imose N."/>
            <person name="Musashino K."/>
            <person name="Yuuki H."/>
            <person name="Oshima A."/>
            <person name="Sasaki N."/>
            <person name="Aotsuka S."/>
            <person name="Yoshikawa Y."/>
            <person name="Matsunawa H."/>
            <person name="Ichihara T."/>
            <person name="Shiohata N."/>
            <person name="Sano S."/>
            <person name="Moriya S."/>
            <person name="Momiyama H."/>
            <person name="Satoh N."/>
            <person name="Takami S."/>
            <person name="Terashima Y."/>
            <person name="Suzuki O."/>
            <person name="Nakagawa S."/>
            <person name="Senoh A."/>
            <person name="Mizoguchi H."/>
            <person name="Goto Y."/>
            <person name="Shimizu F."/>
            <person name="Wakebe H."/>
            <person name="Hishigaki H."/>
            <person name="Watanabe T."/>
            <person name="Sugiyama A."/>
            <person name="Takemoto M."/>
            <person name="Kawakami B."/>
            <person name="Yamazaki M."/>
            <person name="Watanabe K."/>
            <person name="Kumagai A."/>
            <person name="Itakura S."/>
            <person name="Fukuzumi Y."/>
            <person name="Fujimori Y."/>
            <person name="Komiyama M."/>
            <person name="Tashiro H."/>
            <person name="Tanigami A."/>
            <person name="Fujiwara T."/>
            <person name="Ono T."/>
            <person name="Yamada K."/>
            <person name="Fujii Y."/>
            <person name="Ozaki K."/>
            <person name="Hirao M."/>
            <person name="Ohmori Y."/>
            <person name="Kawabata A."/>
            <person name="Hikiji T."/>
            <person name="Kobatake N."/>
            <person name="Inagaki H."/>
            <person name="Ikema Y."/>
            <person name="Okamoto S."/>
            <person name="Okitani R."/>
            <person name="Kawakami T."/>
            <person name="Noguchi S."/>
            <person name="Itoh T."/>
            <person name="Shigeta K."/>
            <person name="Senba T."/>
            <person name="Matsumura K."/>
            <person name="Nakajima Y."/>
            <person name="Mizuno T."/>
            <person name="Morinaga M."/>
            <person name="Sasaki M."/>
            <person name="Togashi T."/>
            <person name="Oyama M."/>
            <person name="Hata H."/>
            <person name="Watanabe M."/>
            <person name="Komatsu T."/>
            <person name="Mizushima-Sugano J."/>
            <person name="Satoh T."/>
            <person name="Shirai Y."/>
            <person name="Takahashi Y."/>
            <person name="Nakagawa K."/>
            <person name="Okumura K."/>
            <person name="Nagase T."/>
            <person name="Nomura N."/>
            <person name="Kikuchi H."/>
            <person name="Masuho Y."/>
            <person name="Yamashita R."/>
            <person name="Nakai K."/>
            <person name="Yada T."/>
            <person name="Nakamura Y."/>
            <person name="Ohara O."/>
            <person name="Isogai T."/>
            <person name="Sugano S."/>
        </authorList>
    </citation>
    <scope>NUCLEOTIDE SEQUENCE [LARGE SCALE MRNA] (ISOFORM 2)</scope>
    <source>
        <tissue>Thalamus</tissue>
    </source>
</reference>
<reference key="3">
    <citation type="journal article" date="2004" name="Nature">
        <title>The DNA sequence and biology of human chromosome 19.</title>
        <authorList>
            <person name="Grimwood J."/>
            <person name="Gordon L.A."/>
            <person name="Olsen A.S."/>
            <person name="Terry A."/>
            <person name="Schmutz J."/>
            <person name="Lamerdin J.E."/>
            <person name="Hellsten U."/>
            <person name="Goodstein D."/>
            <person name="Couronne O."/>
            <person name="Tran-Gyamfi M."/>
            <person name="Aerts A."/>
            <person name="Altherr M."/>
            <person name="Ashworth L."/>
            <person name="Bajorek E."/>
            <person name="Black S."/>
            <person name="Branscomb E."/>
            <person name="Caenepeel S."/>
            <person name="Carrano A.V."/>
            <person name="Caoile C."/>
            <person name="Chan Y.M."/>
            <person name="Christensen M."/>
            <person name="Cleland C.A."/>
            <person name="Copeland A."/>
            <person name="Dalin E."/>
            <person name="Dehal P."/>
            <person name="Denys M."/>
            <person name="Detter J.C."/>
            <person name="Escobar J."/>
            <person name="Flowers D."/>
            <person name="Fotopulos D."/>
            <person name="Garcia C."/>
            <person name="Georgescu A.M."/>
            <person name="Glavina T."/>
            <person name="Gomez M."/>
            <person name="Gonzales E."/>
            <person name="Groza M."/>
            <person name="Hammon N."/>
            <person name="Hawkins T."/>
            <person name="Haydu L."/>
            <person name="Ho I."/>
            <person name="Huang W."/>
            <person name="Israni S."/>
            <person name="Jett J."/>
            <person name="Kadner K."/>
            <person name="Kimball H."/>
            <person name="Kobayashi A."/>
            <person name="Larionov V."/>
            <person name="Leem S.-H."/>
            <person name="Lopez F."/>
            <person name="Lou Y."/>
            <person name="Lowry S."/>
            <person name="Malfatti S."/>
            <person name="Martinez D."/>
            <person name="McCready P.M."/>
            <person name="Medina C."/>
            <person name="Morgan J."/>
            <person name="Nelson K."/>
            <person name="Nolan M."/>
            <person name="Ovcharenko I."/>
            <person name="Pitluck S."/>
            <person name="Pollard M."/>
            <person name="Popkie A.P."/>
            <person name="Predki P."/>
            <person name="Quan G."/>
            <person name="Ramirez L."/>
            <person name="Rash S."/>
            <person name="Retterer J."/>
            <person name="Rodriguez A."/>
            <person name="Rogers S."/>
            <person name="Salamov A."/>
            <person name="Salazar A."/>
            <person name="She X."/>
            <person name="Smith D."/>
            <person name="Slezak T."/>
            <person name="Solovyev V."/>
            <person name="Thayer N."/>
            <person name="Tice H."/>
            <person name="Tsai M."/>
            <person name="Ustaszewska A."/>
            <person name="Vo N."/>
            <person name="Wagner M."/>
            <person name="Wheeler J."/>
            <person name="Wu K."/>
            <person name="Xie G."/>
            <person name="Yang J."/>
            <person name="Dubchak I."/>
            <person name="Furey T.S."/>
            <person name="DeJong P."/>
            <person name="Dickson M."/>
            <person name="Gordon D."/>
            <person name="Eichler E.E."/>
            <person name="Pennacchio L.A."/>
            <person name="Richardson P."/>
            <person name="Stubbs L."/>
            <person name="Rokhsar D.S."/>
            <person name="Myers R.M."/>
            <person name="Rubin E.M."/>
            <person name="Lucas S.M."/>
        </authorList>
    </citation>
    <scope>NUCLEOTIDE SEQUENCE [LARGE SCALE GENOMIC DNA]</scope>
</reference>
<reference key="4">
    <citation type="journal article" date="2004" name="Genome Res.">
        <title>The status, quality, and expansion of the NIH full-length cDNA project: the Mammalian Gene Collection (MGC).</title>
        <authorList>
            <consortium name="The MGC Project Team"/>
        </authorList>
    </citation>
    <scope>NUCLEOTIDE SEQUENCE [LARGE SCALE MRNA] OF 1-528 (ISOFORM 1)</scope>
    <source>
        <tissue>Pancreas</tissue>
    </source>
</reference>
<reference key="5">
    <citation type="journal article" date="2003" name="J. Biol. Chem.">
        <title>SAFB2, a new scaffold attachment factor homolog and estrogen receptor corepressor.</title>
        <authorList>
            <person name="Townson S.M."/>
            <person name="Dobrzycka K.M."/>
            <person name="Lee A.V."/>
            <person name="Air M."/>
            <person name="Deng W."/>
            <person name="Kang K."/>
            <person name="Jiang S."/>
            <person name="Kioka N."/>
            <person name="Michaelis K."/>
            <person name="Oesterreich S."/>
        </authorList>
    </citation>
    <scope>CHARACTERIZATION</scope>
</reference>
<reference key="6">
    <citation type="journal article" date="2006" name="Cell">
        <title>Global, in vivo, and site-specific phosphorylation dynamics in signaling networks.</title>
        <authorList>
            <person name="Olsen J.V."/>
            <person name="Blagoev B."/>
            <person name="Gnad F."/>
            <person name="Macek B."/>
            <person name="Kumar C."/>
            <person name="Mortensen P."/>
            <person name="Mann M."/>
        </authorList>
    </citation>
    <scope>PHOSPHORYLATION [LARGE SCALE ANALYSIS] AT SER-513</scope>
    <scope>IDENTIFICATION BY MASS SPECTROMETRY [LARGE SCALE ANALYSIS]</scope>
    <source>
        <tissue>Cervix carcinoma</tissue>
    </source>
</reference>
<reference key="7">
    <citation type="journal article" date="2008" name="J. Proteome Res.">
        <title>Phosphorylation analysis of primary human T lymphocytes using sequential IMAC and titanium oxide enrichment.</title>
        <authorList>
            <person name="Carrascal M."/>
            <person name="Ovelleiro D."/>
            <person name="Casas V."/>
            <person name="Gay M."/>
            <person name="Abian J."/>
        </authorList>
    </citation>
    <scope>PHOSPHORYLATION [LARGE SCALE ANALYSIS] AT SER-109</scope>
    <scope>IDENTIFICATION BY MASS SPECTROMETRY [LARGE SCALE ANALYSIS]</scope>
    <source>
        <tissue>T-cell</tissue>
    </source>
</reference>
<reference key="8">
    <citation type="journal article" date="2008" name="Proc. Natl. Acad. Sci. U.S.A.">
        <title>A quantitative atlas of mitotic phosphorylation.</title>
        <authorList>
            <person name="Dephoure N."/>
            <person name="Zhou C."/>
            <person name="Villen J."/>
            <person name="Beausoleil S.A."/>
            <person name="Bakalarski C.E."/>
            <person name="Elledge S.J."/>
            <person name="Gygi S.P."/>
        </authorList>
    </citation>
    <scope>PHOSPHORYLATION [LARGE SCALE ANALYSIS] AT SER-207</scope>
    <scope>IDENTIFICATION BY MASS SPECTROMETRY [LARGE SCALE ANALYSIS]</scope>
    <source>
        <tissue>Cervix carcinoma</tissue>
    </source>
</reference>
<reference key="9">
    <citation type="journal article" date="2009" name="Anal. Chem.">
        <title>Lys-N and trypsin cover complementary parts of the phosphoproteome in a refined SCX-based approach.</title>
        <authorList>
            <person name="Gauci S."/>
            <person name="Helbig A.O."/>
            <person name="Slijper M."/>
            <person name="Krijgsveld J."/>
            <person name="Heck A.J."/>
            <person name="Mohammed S."/>
        </authorList>
    </citation>
    <scope>ACETYLATION [LARGE SCALE ANALYSIS] AT ALA-2</scope>
    <scope>CLEAVAGE OF INITIATOR METHIONINE [LARGE SCALE ANALYSIS]</scope>
    <scope>IDENTIFICATION BY MASS SPECTROMETRY [LARGE SCALE ANALYSIS]</scope>
</reference>
<reference key="10">
    <citation type="journal article" date="2009" name="FEBS J.">
        <title>The enzymatic activity of SR protein kinases 1 and 1a is negatively affected by interaction with scaffold attachment factors B1 and 2.</title>
        <authorList>
            <person name="Tsianou D."/>
            <person name="Nikolakaki E."/>
            <person name="Tzitzira A."/>
            <person name="Bonanou S."/>
            <person name="Giannakouros T."/>
            <person name="Georgatsou E."/>
        </authorList>
    </citation>
    <scope>INTERACTION WITH SRPK1</scope>
</reference>
<reference key="11">
    <citation type="journal article" date="2009" name="Sci. Signal.">
        <title>Quantitative phosphoproteomic analysis of T cell receptor signaling reveals system-wide modulation of protein-protein interactions.</title>
        <authorList>
            <person name="Mayya V."/>
            <person name="Lundgren D.H."/>
            <person name="Hwang S.-I."/>
            <person name="Rezaul K."/>
            <person name="Wu L."/>
            <person name="Eng J.K."/>
            <person name="Rodionov V."/>
            <person name="Han D.K."/>
        </authorList>
    </citation>
    <scope>IDENTIFICATION BY MASS SPECTROMETRY [LARGE SCALE ANALYSIS]</scope>
    <source>
        <tissue>Leukemic T-cell</tissue>
    </source>
</reference>
<reference key="12">
    <citation type="journal article" date="2009" name="Science">
        <title>Lysine acetylation targets protein complexes and co-regulates major cellular functions.</title>
        <authorList>
            <person name="Choudhary C."/>
            <person name="Kumar C."/>
            <person name="Gnad F."/>
            <person name="Nielsen M.L."/>
            <person name="Rehman M."/>
            <person name="Walther T.C."/>
            <person name="Olsen J.V."/>
            <person name="Mann M."/>
        </authorList>
    </citation>
    <scope>ACETYLATION [LARGE SCALE ANALYSIS] AT LYS-616</scope>
    <scope>IDENTIFICATION BY MASS SPECTROMETRY [LARGE SCALE ANALYSIS]</scope>
</reference>
<reference key="13">
    <citation type="journal article" date="2010" name="Sci. Signal.">
        <title>Quantitative phosphoproteomics reveals widespread full phosphorylation site occupancy during mitosis.</title>
        <authorList>
            <person name="Olsen J.V."/>
            <person name="Vermeulen M."/>
            <person name="Santamaria A."/>
            <person name="Kumar C."/>
            <person name="Miller M.L."/>
            <person name="Jensen L.J."/>
            <person name="Gnad F."/>
            <person name="Cox J."/>
            <person name="Jensen T.S."/>
            <person name="Nigg E.A."/>
            <person name="Brunak S."/>
            <person name="Mann M."/>
        </authorList>
    </citation>
    <scope>PHOSPHORYLATION [LARGE SCALE ANALYSIS] AT SER-109; THR-201; SER-207 AND SER-513</scope>
    <scope>IDENTIFICATION BY MASS SPECTROMETRY [LARGE SCALE ANALYSIS]</scope>
    <source>
        <tissue>Cervix carcinoma</tissue>
    </source>
</reference>
<reference key="14">
    <citation type="journal article" date="2011" name="BMC Syst. Biol.">
        <title>Initial characterization of the human central proteome.</title>
        <authorList>
            <person name="Burkard T.R."/>
            <person name="Planyavsky M."/>
            <person name="Kaupe I."/>
            <person name="Breitwieser F.P."/>
            <person name="Buerckstuemmer T."/>
            <person name="Bennett K.L."/>
            <person name="Superti-Furga G."/>
            <person name="Colinge J."/>
        </authorList>
    </citation>
    <scope>IDENTIFICATION BY MASS SPECTROMETRY [LARGE SCALE ANALYSIS]</scope>
</reference>
<reference key="15">
    <citation type="journal article" date="2011" name="Biochem. Biophys. Res. Commun.">
        <title>Co-repressor activity of scaffold attachment factor B1 requires sumoylation.</title>
        <authorList>
            <person name="Garee J.P."/>
            <person name="Meyer R."/>
            <person name="Oesterreich S."/>
        </authorList>
    </citation>
    <scope>SUMOYLATION AT LYS-230 AND LYS-293</scope>
</reference>
<reference key="16">
    <citation type="journal article" date="2011" name="Sci. Signal.">
        <title>System-wide temporal characterization of the proteome and phosphoproteome of human embryonic stem cell differentiation.</title>
        <authorList>
            <person name="Rigbolt K.T."/>
            <person name="Prokhorova T.A."/>
            <person name="Akimov V."/>
            <person name="Henningsen J."/>
            <person name="Johansen P.T."/>
            <person name="Kratchmarova I."/>
            <person name="Kassem M."/>
            <person name="Mann M."/>
            <person name="Olsen J.V."/>
            <person name="Blagoev B."/>
        </authorList>
    </citation>
    <scope>PHOSPHORYLATION [LARGE SCALE ANALYSIS] AT SER-109</scope>
    <scope>IDENTIFICATION BY MASS SPECTROMETRY [LARGE SCALE ANALYSIS]</scope>
</reference>
<reference key="17">
    <citation type="journal article" date="2012" name="Mol. Cell. Proteomics">
        <title>Comparative large-scale characterisation of plant vs. mammal proteins reveals similar and idiosyncratic N-alpha acetylation features.</title>
        <authorList>
            <person name="Bienvenut W.V."/>
            <person name="Sumpton D."/>
            <person name="Martinez A."/>
            <person name="Lilla S."/>
            <person name="Espagne C."/>
            <person name="Meinnel T."/>
            <person name="Giglione C."/>
        </authorList>
    </citation>
    <scope>ACETYLATION [LARGE SCALE ANALYSIS] AT ALA-2</scope>
    <scope>CLEAVAGE OF INITIATOR METHIONINE [LARGE SCALE ANALYSIS]</scope>
    <scope>IDENTIFICATION BY MASS SPECTROMETRY [LARGE SCALE ANALYSIS]</scope>
</reference>
<reference key="18">
    <citation type="journal article" date="2012" name="Proc. Natl. Acad. Sci. U.S.A.">
        <title>N-terminal acetylome analyses and functional insights of the N-terminal acetyltransferase NatB.</title>
        <authorList>
            <person name="Van Damme P."/>
            <person name="Lasa M."/>
            <person name="Polevoda B."/>
            <person name="Gazquez C."/>
            <person name="Elosegui-Artola A."/>
            <person name="Kim D.S."/>
            <person name="De Juan-Pardo E."/>
            <person name="Demeyer K."/>
            <person name="Hole K."/>
            <person name="Larrea E."/>
            <person name="Timmerman E."/>
            <person name="Prieto J."/>
            <person name="Arnesen T."/>
            <person name="Sherman F."/>
            <person name="Gevaert K."/>
            <person name="Aldabe R."/>
        </authorList>
    </citation>
    <scope>ACETYLATION [LARGE SCALE ANALYSIS] AT ALA-2</scope>
    <scope>CLEAVAGE OF INITIATOR METHIONINE [LARGE SCALE ANALYSIS]</scope>
    <scope>IDENTIFICATION BY MASS SPECTROMETRY [LARGE SCALE ANALYSIS]</scope>
</reference>
<reference key="19">
    <citation type="journal article" date="2013" name="J. Proteome Res.">
        <title>Toward a comprehensive characterization of a human cancer cell phosphoproteome.</title>
        <authorList>
            <person name="Zhou H."/>
            <person name="Di Palma S."/>
            <person name="Preisinger C."/>
            <person name="Peng M."/>
            <person name="Polat A.N."/>
            <person name="Heck A.J."/>
            <person name="Mohammed S."/>
        </authorList>
    </citation>
    <scope>PHOSPHORYLATION [LARGE SCALE ANALYSIS] AT SER-54; SER-207; SER-507; SER-513; SER-787; SER-832 AND SER-886</scope>
    <scope>IDENTIFICATION BY MASS SPECTROMETRY [LARGE SCALE ANALYSIS]</scope>
    <source>
        <tissue>Cervix carcinoma</tissue>
        <tissue>Erythroleukemia</tissue>
    </source>
</reference>
<reference key="20">
    <citation type="journal article" date="2014" name="J. Proteomics">
        <title>An enzyme assisted RP-RPLC approach for in-depth analysis of human liver phosphoproteome.</title>
        <authorList>
            <person name="Bian Y."/>
            <person name="Song C."/>
            <person name="Cheng K."/>
            <person name="Dong M."/>
            <person name="Wang F."/>
            <person name="Huang J."/>
            <person name="Sun D."/>
            <person name="Wang L."/>
            <person name="Ye M."/>
            <person name="Zou H."/>
        </authorList>
    </citation>
    <scope>PHOSPHORYLATION [LARGE SCALE ANALYSIS] AT SER-158</scope>
    <scope>IDENTIFICATION BY MASS SPECTROMETRY [LARGE SCALE ANALYSIS]</scope>
    <source>
        <tissue>Liver</tissue>
    </source>
</reference>
<reference key="21">
    <citation type="journal article" date="2014" name="Mol. Cell. Proteomics">
        <title>Immunoaffinity enrichment and mass spectrometry analysis of protein methylation.</title>
        <authorList>
            <person name="Guo A."/>
            <person name="Gu H."/>
            <person name="Zhou J."/>
            <person name="Mulhern D."/>
            <person name="Wang Y."/>
            <person name="Lee K.A."/>
            <person name="Yang V."/>
            <person name="Aguiar M."/>
            <person name="Kornhauser J."/>
            <person name="Jia X."/>
            <person name="Ren J."/>
            <person name="Beausoleil S.A."/>
            <person name="Silva J.C."/>
            <person name="Vemulapalli V."/>
            <person name="Bedford M.T."/>
            <person name="Comb M.J."/>
        </authorList>
    </citation>
    <scope>METHYLATION [LARGE SCALE ANALYSIS] AT ARG-897 AND ARG-903</scope>
    <scope>IDENTIFICATION BY MASS SPECTROMETRY [LARGE SCALE ANALYSIS]</scope>
    <source>
        <tissue>Colon carcinoma</tissue>
    </source>
</reference>
<reference key="22">
    <citation type="journal article" date="2014" name="Nat. Struct. Mol. Biol.">
        <title>Uncovering global SUMOylation signaling networks in a site-specific manner.</title>
        <authorList>
            <person name="Hendriks I.A."/>
            <person name="D'Souza R.C."/>
            <person name="Yang B."/>
            <person name="Verlaan-de Vries M."/>
            <person name="Mann M."/>
            <person name="Vertegaal A.C."/>
        </authorList>
    </citation>
    <scope>SUMOYLATION [LARGE SCALE ANALYSIS] AT LYS-65; LYS-94; LYS-385; LYS-388; LYS-391; LYS-395; LYS-517; LYS-541 AND LYS-551</scope>
    <scope>IDENTIFICATION BY MASS SPECTROMETRY [LARGE SCALE ANALYSIS]</scope>
</reference>
<reference key="23">
    <citation type="journal article" date="2014" name="Proc. Natl. Acad. Sci. U.S.A.">
        <title>Mapping of SUMO sites and analysis of SUMOylation changes induced by external stimuli.</title>
        <authorList>
            <person name="Impens F."/>
            <person name="Radoshevich L."/>
            <person name="Cossart P."/>
            <person name="Ribet D."/>
        </authorList>
    </citation>
    <scope>SUMOYLATION [LARGE SCALE ANALYSIS] AT LYS-65</scope>
    <scope>IDENTIFICATION BY MASS SPECTROMETRY [LARGE SCALE ANALYSIS]</scope>
</reference>
<reference key="24">
    <citation type="journal article" date="2015" name="Cell Rep.">
        <title>SUMO-2 orchestrates chromatin modifiers in response to DNA damage.</title>
        <authorList>
            <person name="Hendriks I.A."/>
            <person name="Treffers L.W."/>
            <person name="Verlaan-de Vries M."/>
            <person name="Olsen J.V."/>
            <person name="Vertegaal A.C."/>
        </authorList>
    </citation>
    <scope>SUMOYLATION [LARGE SCALE ANALYSIS] AT LYS-65; LYS-385; LYS-391; LYS-395; LYS-517; LYS-541 AND LYS-551</scope>
    <scope>IDENTIFICATION BY MASS SPECTROMETRY [LARGE SCALE ANALYSIS]</scope>
</reference>
<reference key="25">
    <citation type="journal article" date="2015" name="Mol. Cell. Proteomics">
        <title>System-wide analysis of SUMOylation dynamics in response to replication stress reveals novel small ubiquitin-like modified target proteins and acceptor lysines relevant for genome stability.</title>
        <authorList>
            <person name="Xiao Z."/>
            <person name="Chang J.G."/>
            <person name="Hendriks I.A."/>
            <person name="Sigurdsson J.O."/>
            <person name="Olsen J.V."/>
            <person name="Vertegaal A.C."/>
        </authorList>
    </citation>
    <scope>SUMOYLATION [LARGE SCALE ANALYSIS] AT LYS-380; LYS-385; LYS-391; LYS-395; LYS-517; LYS-524; LYS-541; LYS-551; LYS-578 AND LYS-586</scope>
    <scope>IDENTIFICATION BY MASS SPECTROMETRY [LARGE SCALE ANALYSIS]</scope>
</reference>
<reference key="26">
    <citation type="journal article" date="2017" name="Nat. Struct. Mol. Biol.">
        <title>Site-specific mapping of the human SUMO proteome reveals co-modification with phosphorylation.</title>
        <authorList>
            <person name="Hendriks I.A."/>
            <person name="Lyon D."/>
            <person name="Young C."/>
            <person name="Jensen L.J."/>
            <person name="Vertegaal A.C."/>
            <person name="Nielsen M.L."/>
        </authorList>
    </citation>
    <scope>SUMOYLATION [LARGE SCALE ANALYSIS] AT LYS-65; LYS-188; LYS-199; LYS-380; LYS-385; LYS-388; LYS-391; LYS-395; LYS-517; LYS-524; LYS-525; LYS-541; LYS-542; LYS-551; LYS-578; LYS-586; LYS-608 AND LYS-616</scope>
    <scope>IDENTIFICATION BY MASS SPECTROMETRY [LARGE SCALE ANALYSIS]</scope>
</reference>
<dbReference type="EMBL" id="D50928">
    <property type="protein sequence ID" value="BAA09487.2"/>
    <property type="status" value="ALT_INIT"/>
    <property type="molecule type" value="mRNA"/>
</dbReference>
<dbReference type="EMBL" id="AK296552">
    <property type="protein sequence ID" value="BAG59175.1"/>
    <property type="molecule type" value="mRNA"/>
</dbReference>
<dbReference type="EMBL" id="AC004611">
    <property type="protein sequence ID" value="AAC14666.1"/>
    <property type="molecule type" value="Genomic_DNA"/>
</dbReference>
<dbReference type="EMBL" id="BC025279">
    <property type="protein sequence ID" value="AAH25279.1"/>
    <property type="molecule type" value="mRNA"/>
</dbReference>
<dbReference type="CCDS" id="CCDS32879.1">
    <molecule id="Q14151-1"/>
</dbReference>
<dbReference type="RefSeq" id="NP_055464.1">
    <molecule id="Q14151-1"/>
    <property type="nucleotide sequence ID" value="NM_014649.3"/>
</dbReference>
<dbReference type="SMR" id="Q14151"/>
<dbReference type="BioGRID" id="115022">
    <property type="interactions" value="221"/>
</dbReference>
<dbReference type="FunCoup" id="Q14151">
    <property type="interactions" value="3145"/>
</dbReference>
<dbReference type="IntAct" id="Q14151">
    <property type="interactions" value="141"/>
</dbReference>
<dbReference type="MINT" id="Q14151"/>
<dbReference type="STRING" id="9606.ENSP00000252542"/>
<dbReference type="GlyGen" id="Q14151">
    <property type="glycosylation" value="2 sites, 1 O-linked glycan (1 site)"/>
</dbReference>
<dbReference type="iPTMnet" id="Q14151"/>
<dbReference type="PhosphoSitePlus" id="Q14151"/>
<dbReference type="SwissPalm" id="Q14151"/>
<dbReference type="BioMuta" id="SAFB2"/>
<dbReference type="DMDM" id="38372432"/>
<dbReference type="jPOST" id="Q14151"/>
<dbReference type="MassIVE" id="Q14151"/>
<dbReference type="PaxDb" id="9606-ENSP00000252542"/>
<dbReference type="PeptideAtlas" id="Q14151"/>
<dbReference type="ProteomicsDB" id="59853">
    <molecule id="Q14151-1"/>
</dbReference>
<dbReference type="Pumba" id="Q14151"/>
<dbReference type="Antibodypedia" id="23844">
    <property type="antibodies" value="219 antibodies from 28 providers"/>
</dbReference>
<dbReference type="DNASU" id="9667"/>
<dbReference type="Ensembl" id="ENST00000252542.9">
    <molecule id="Q14151-1"/>
    <property type="protein sequence ID" value="ENSP00000252542.3"/>
    <property type="gene ID" value="ENSG00000130254.13"/>
</dbReference>
<dbReference type="Ensembl" id="ENST00000591120.1">
    <molecule id="Q14151-2"/>
    <property type="protein sequence ID" value="ENSP00000468505.1"/>
    <property type="gene ID" value="ENSG00000130254.13"/>
</dbReference>
<dbReference type="Ensembl" id="ENST00000850599.1">
    <molecule id="Q14151-1"/>
    <property type="protein sequence ID" value="ENSP00000520886.1"/>
    <property type="gene ID" value="ENSG00000130254.13"/>
</dbReference>
<dbReference type="GeneID" id="9667"/>
<dbReference type="KEGG" id="hsa:9667"/>
<dbReference type="MANE-Select" id="ENST00000252542.9">
    <property type="protein sequence ID" value="ENSP00000252542.3"/>
    <property type="RefSeq nucleotide sequence ID" value="NM_014649.3"/>
    <property type="RefSeq protein sequence ID" value="NP_055464.1"/>
</dbReference>
<dbReference type="UCSC" id="uc002mcd.4">
    <molecule id="Q14151-1"/>
    <property type="organism name" value="human"/>
</dbReference>
<dbReference type="AGR" id="HGNC:21605"/>
<dbReference type="CTD" id="9667"/>
<dbReference type="DisGeNET" id="9667"/>
<dbReference type="GeneCards" id="SAFB2"/>
<dbReference type="HGNC" id="HGNC:21605">
    <property type="gene designation" value="SAFB2"/>
</dbReference>
<dbReference type="HPA" id="ENSG00000130254">
    <property type="expression patterns" value="Low tissue specificity"/>
</dbReference>
<dbReference type="MIM" id="608066">
    <property type="type" value="gene"/>
</dbReference>
<dbReference type="neXtProt" id="NX_Q14151"/>
<dbReference type="OpenTargets" id="ENSG00000130254"/>
<dbReference type="PharmGKB" id="PA134987683"/>
<dbReference type="VEuPathDB" id="HostDB:ENSG00000130254"/>
<dbReference type="eggNOG" id="KOG4661">
    <property type="taxonomic scope" value="Eukaryota"/>
</dbReference>
<dbReference type="GeneTree" id="ENSGT00940000161482"/>
<dbReference type="HOGENOM" id="CLU_015021_0_0_1"/>
<dbReference type="InParanoid" id="Q14151"/>
<dbReference type="OMA" id="NRYMGGG"/>
<dbReference type="OrthoDB" id="6159259at2759"/>
<dbReference type="PAN-GO" id="Q14151">
    <property type="GO annotations" value="5 GO annotations based on evolutionary models"/>
</dbReference>
<dbReference type="PhylomeDB" id="Q14151"/>
<dbReference type="TreeFam" id="TF325240"/>
<dbReference type="PathwayCommons" id="Q14151"/>
<dbReference type="SignaLink" id="Q14151"/>
<dbReference type="BioGRID-ORCS" id="9667">
    <property type="hits" value="37 hits in 1160 CRISPR screens"/>
</dbReference>
<dbReference type="CD-CODE" id="232F8A39">
    <property type="entry name" value="P-body"/>
</dbReference>
<dbReference type="CD-CODE" id="62EA6512">
    <property type="entry name" value="Sam68 nuclear body"/>
</dbReference>
<dbReference type="CD-CODE" id="DEE660B4">
    <property type="entry name" value="Stress granule"/>
</dbReference>
<dbReference type="ChiTaRS" id="SAFB2">
    <property type="organism name" value="human"/>
</dbReference>
<dbReference type="GeneWiki" id="SAFB2"/>
<dbReference type="GenomeRNAi" id="9667"/>
<dbReference type="Pharos" id="Q14151">
    <property type="development level" value="Tbio"/>
</dbReference>
<dbReference type="PRO" id="PR:Q14151"/>
<dbReference type="Proteomes" id="UP000005640">
    <property type="component" value="Chromosome 19"/>
</dbReference>
<dbReference type="RNAct" id="Q14151">
    <property type="molecule type" value="protein"/>
</dbReference>
<dbReference type="Bgee" id="ENSG00000130254">
    <property type="expression patterns" value="Expressed in right hemisphere of cerebellum and 202 other cell types or tissues"/>
</dbReference>
<dbReference type="ExpressionAtlas" id="Q14151">
    <property type="expression patterns" value="baseline and differential"/>
</dbReference>
<dbReference type="GO" id="GO:0005737">
    <property type="term" value="C:cytoplasm"/>
    <property type="evidence" value="ECO:0007669"/>
    <property type="project" value="UniProtKB-SubCell"/>
</dbReference>
<dbReference type="GO" id="GO:0070062">
    <property type="term" value="C:extracellular exosome"/>
    <property type="evidence" value="ECO:0007005"/>
    <property type="project" value="UniProtKB"/>
</dbReference>
<dbReference type="GO" id="GO:0043231">
    <property type="term" value="C:intracellular membrane-bounded organelle"/>
    <property type="evidence" value="ECO:0000314"/>
    <property type="project" value="HPA"/>
</dbReference>
<dbReference type="GO" id="GO:0016604">
    <property type="term" value="C:nuclear body"/>
    <property type="evidence" value="ECO:0000314"/>
    <property type="project" value="HPA"/>
</dbReference>
<dbReference type="GO" id="GO:0005654">
    <property type="term" value="C:nucleoplasm"/>
    <property type="evidence" value="ECO:0000314"/>
    <property type="project" value="HPA"/>
</dbReference>
<dbReference type="GO" id="GO:0005634">
    <property type="term" value="C:nucleus"/>
    <property type="evidence" value="ECO:0000318"/>
    <property type="project" value="GO_Central"/>
</dbReference>
<dbReference type="GO" id="GO:0042802">
    <property type="term" value="F:identical protein binding"/>
    <property type="evidence" value="ECO:0000353"/>
    <property type="project" value="IntAct"/>
</dbReference>
<dbReference type="GO" id="GO:0003723">
    <property type="term" value="F:RNA binding"/>
    <property type="evidence" value="ECO:0007005"/>
    <property type="project" value="UniProtKB"/>
</dbReference>
<dbReference type="GO" id="GO:0043565">
    <property type="term" value="F:sequence-specific DNA binding"/>
    <property type="evidence" value="ECO:0000318"/>
    <property type="project" value="GO_Central"/>
</dbReference>
<dbReference type="GO" id="GO:0060765">
    <property type="term" value="P:regulation of androgen receptor signaling pathway"/>
    <property type="evidence" value="ECO:0000318"/>
    <property type="project" value="GO_Central"/>
</dbReference>
<dbReference type="GO" id="GO:0050684">
    <property type="term" value="P:regulation of mRNA processing"/>
    <property type="evidence" value="ECO:0000318"/>
    <property type="project" value="GO_Central"/>
</dbReference>
<dbReference type="GO" id="GO:0006357">
    <property type="term" value="P:regulation of transcription by RNA polymerase II"/>
    <property type="evidence" value="ECO:0000318"/>
    <property type="project" value="GO_Central"/>
</dbReference>
<dbReference type="GO" id="GO:0060008">
    <property type="term" value="P:Sertoli cell differentiation"/>
    <property type="evidence" value="ECO:0007669"/>
    <property type="project" value="Ensembl"/>
</dbReference>
<dbReference type="CDD" id="cd12679">
    <property type="entry name" value="RRM_SAFB1_SAFB2"/>
    <property type="match status" value="1"/>
</dbReference>
<dbReference type="FunFam" id="3.30.70.330:FF:000197">
    <property type="entry name" value="Scaffold attachment factor B2"/>
    <property type="match status" value="1"/>
</dbReference>
<dbReference type="FunFam" id="1.10.720.30:FF:000005">
    <property type="entry name" value="scaffold attachment factor B2 isoform X1"/>
    <property type="match status" value="1"/>
</dbReference>
<dbReference type="Gene3D" id="3.30.70.330">
    <property type="match status" value="1"/>
</dbReference>
<dbReference type="Gene3D" id="1.10.720.30">
    <property type="entry name" value="SAP domain"/>
    <property type="match status" value="1"/>
</dbReference>
<dbReference type="InterPro" id="IPR012677">
    <property type="entry name" value="Nucleotide-bd_a/b_plait_sf"/>
</dbReference>
<dbReference type="InterPro" id="IPR035979">
    <property type="entry name" value="RBD_domain_sf"/>
</dbReference>
<dbReference type="InterPro" id="IPR000504">
    <property type="entry name" value="RRM_dom"/>
</dbReference>
<dbReference type="InterPro" id="IPR051738">
    <property type="entry name" value="SAF_Modulators"/>
</dbReference>
<dbReference type="InterPro" id="IPR034781">
    <property type="entry name" value="SAFB1_2_RBD"/>
</dbReference>
<dbReference type="InterPro" id="IPR003034">
    <property type="entry name" value="SAP_dom"/>
</dbReference>
<dbReference type="InterPro" id="IPR036361">
    <property type="entry name" value="SAP_dom_sf"/>
</dbReference>
<dbReference type="PANTHER" id="PTHR15683">
    <property type="entry name" value="SCAFFOLD ATTACHMENT FACTOR B-RELATED"/>
    <property type="match status" value="1"/>
</dbReference>
<dbReference type="PANTHER" id="PTHR15683:SF4">
    <property type="entry name" value="SCAFFOLD ATTACHMENT FACTOR B2"/>
    <property type="match status" value="1"/>
</dbReference>
<dbReference type="Pfam" id="PF00076">
    <property type="entry name" value="RRM_1"/>
    <property type="match status" value="1"/>
</dbReference>
<dbReference type="Pfam" id="PF02037">
    <property type="entry name" value="SAP"/>
    <property type="match status" value="1"/>
</dbReference>
<dbReference type="SMART" id="SM00360">
    <property type="entry name" value="RRM"/>
    <property type="match status" value="1"/>
</dbReference>
<dbReference type="SMART" id="SM00513">
    <property type="entry name" value="SAP"/>
    <property type="match status" value="1"/>
</dbReference>
<dbReference type="SUPFAM" id="SSF54928">
    <property type="entry name" value="RNA-binding domain, RBD"/>
    <property type="match status" value="1"/>
</dbReference>
<dbReference type="SUPFAM" id="SSF68906">
    <property type="entry name" value="SAP domain"/>
    <property type="match status" value="1"/>
</dbReference>
<dbReference type="PROSITE" id="PS50102">
    <property type="entry name" value="RRM"/>
    <property type="match status" value="1"/>
</dbReference>
<dbReference type="PROSITE" id="PS50800">
    <property type="entry name" value="SAP"/>
    <property type="match status" value="1"/>
</dbReference>
<proteinExistence type="evidence at protein level"/>
<name>SAFB2_HUMAN</name>
<feature type="initiator methionine" description="Removed" evidence="12 16 17">
    <location>
        <position position="1"/>
    </location>
</feature>
<feature type="chain" id="PRO_0000081907" description="Scaffold attachment factor B2">
    <location>
        <begin position="2"/>
        <end position="953"/>
    </location>
</feature>
<feature type="domain" description="SAP" evidence="3">
    <location>
        <begin position="30"/>
        <end position="64"/>
    </location>
</feature>
<feature type="domain" description="RRM" evidence="2">
    <location>
        <begin position="407"/>
        <end position="485"/>
    </location>
</feature>
<feature type="region of interest" description="Disordered" evidence="4">
    <location>
        <begin position="1"/>
        <end position="29"/>
    </location>
</feature>
<feature type="region of interest" description="Disordered" evidence="4">
    <location>
        <begin position="91"/>
        <end position="114"/>
    </location>
</feature>
<feature type="region of interest" description="Disordered" evidence="4">
    <location>
        <begin position="219"/>
        <end position="404"/>
    </location>
</feature>
<feature type="region of interest" description="Disordered" evidence="4">
    <location>
        <begin position="525"/>
        <end position="665"/>
    </location>
</feature>
<feature type="region of interest" description="Interaction with SAFB1">
    <location>
        <begin position="600"/>
        <end position="953"/>
    </location>
</feature>
<feature type="region of interest" description="Disordered" evidence="4">
    <location>
        <begin position="684"/>
        <end position="953"/>
    </location>
</feature>
<feature type="short sequence motif" description="Nuclear localization signal" evidence="1">
    <location>
        <begin position="713"/>
        <end position="730"/>
    </location>
</feature>
<feature type="compositionally biased region" description="Acidic residues" evidence="4">
    <location>
        <begin position="98"/>
        <end position="114"/>
    </location>
</feature>
<feature type="compositionally biased region" description="Basic and acidic residues" evidence="4">
    <location>
        <begin position="224"/>
        <end position="233"/>
    </location>
</feature>
<feature type="compositionally biased region" description="Polar residues" evidence="4">
    <location>
        <begin position="274"/>
        <end position="285"/>
    </location>
</feature>
<feature type="compositionally biased region" description="Basic and acidic residues" evidence="4">
    <location>
        <begin position="292"/>
        <end position="308"/>
    </location>
</feature>
<feature type="compositionally biased region" description="Low complexity" evidence="4">
    <location>
        <begin position="318"/>
        <end position="329"/>
    </location>
</feature>
<feature type="compositionally biased region" description="Basic and acidic residues" evidence="4">
    <location>
        <begin position="345"/>
        <end position="358"/>
    </location>
</feature>
<feature type="compositionally biased region" description="Polar residues" evidence="4">
    <location>
        <begin position="370"/>
        <end position="382"/>
    </location>
</feature>
<feature type="compositionally biased region" description="Basic and acidic residues" evidence="4">
    <location>
        <begin position="383"/>
        <end position="400"/>
    </location>
</feature>
<feature type="compositionally biased region" description="Basic and acidic residues" evidence="4">
    <location>
        <begin position="525"/>
        <end position="551"/>
    </location>
</feature>
<feature type="compositionally biased region" description="Polar residues" evidence="4">
    <location>
        <begin position="555"/>
        <end position="564"/>
    </location>
</feature>
<feature type="compositionally biased region" description="Basic and acidic residues" evidence="4">
    <location>
        <begin position="567"/>
        <end position="579"/>
    </location>
</feature>
<feature type="compositionally biased region" description="Basic and acidic residues" evidence="4">
    <location>
        <begin position="590"/>
        <end position="665"/>
    </location>
</feature>
<feature type="compositionally biased region" description="Basic and acidic residues" evidence="4">
    <location>
        <begin position="684"/>
        <end position="820"/>
    </location>
</feature>
<feature type="compositionally biased region" description="Basic and acidic residues" evidence="4">
    <location>
        <begin position="843"/>
        <end position="859"/>
    </location>
</feature>
<feature type="compositionally biased region" description="Gly residues" evidence="4">
    <location>
        <begin position="881"/>
        <end position="890"/>
    </location>
</feature>
<feature type="compositionally biased region" description="Gly residues" evidence="4">
    <location>
        <begin position="899"/>
        <end position="927"/>
    </location>
</feature>
<feature type="modified residue" description="N-acetylalanine" evidence="12 16 17">
    <location>
        <position position="2"/>
    </location>
</feature>
<feature type="modified residue" description="Phosphoserine" evidence="18">
    <location>
        <position position="54"/>
    </location>
</feature>
<feature type="modified residue" description="Phosphoserine" evidence="11 14 15">
    <location>
        <position position="109"/>
    </location>
</feature>
<feature type="modified residue" description="Phosphoserine" evidence="20">
    <location>
        <position position="158"/>
    </location>
</feature>
<feature type="modified residue" description="Phosphothreonine" evidence="14">
    <location>
        <position position="201"/>
    </location>
</feature>
<feature type="modified residue" description="Phosphoserine" evidence="10 14 18">
    <location>
        <position position="207"/>
    </location>
</feature>
<feature type="modified residue" description="Phosphoserine" evidence="18">
    <location>
        <position position="507"/>
    </location>
</feature>
<feature type="modified residue" description="Phosphoserine" evidence="9 14 18">
    <location>
        <position position="513"/>
    </location>
</feature>
<feature type="modified residue" description="N6-acetyllysine; alternate" evidence="13">
    <location>
        <position position="616"/>
    </location>
</feature>
<feature type="modified residue" description="Phosphoserine" evidence="18">
    <location>
        <position position="787"/>
    </location>
</feature>
<feature type="modified residue" description="Phosphoserine" evidence="18">
    <location>
        <position position="832"/>
    </location>
</feature>
<feature type="modified residue" description="Phosphoserine" evidence="18">
    <location>
        <position position="886"/>
    </location>
</feature>
<feature type="modified residue" description="Omega-N-methylarginine" evidence="19">
    <location>
        <position position="897"/>
    </location>
</feature>
<feature type="modified residue" description="Omega-N-methylarginine" evidence="19">
    <location>
        <position position="903"/>
    </location>
</feature>
<feature type="cross-link" description="Glycyl lysine isopeptide (Lys-Gly) (interchain with G-Cter in SUMO1); alternate" evidence="21">
    <location>
        <position position="65"/>
    </location>
</feature>
<feature type="cross-link" description="Glycyl lysine isopeptide (Lys-Gly) (interchain with G-Cter in SUMO2); alternate" evidence="21 22 24 25">
    <location>
        <position position="65"/>
    </location>
</feature>
<feature type="cross-link" description="Glycyl lysine isopeptide (Lys-Gly) (interchain with G-Cter in SUMO2)" evidence="22">
    <location>
        <position position="94"/>
    </location>
</feature>
<feature type="cross-link" description="Glycyl lysine isopeptide (Lys-Gly) (interchain with G-Cter in SUMO2)" evidence="25">
    <location>
        <position position="188"/>
    </location>
</feature>
<feature type="cross-link" description="Glycyl lysine isopeptide (Lys-Gly) (interchain with G-Cter in SUMO2)" evidence="25">
    <location>
        <position position="199"/>
    </location>
</feature>
<feature type="cross-link" description="Glycyl lysine isopeptide (Lys-Gly) (interchain with G-Cter in SUMO)" evidence="6">
    <location>
        <position position="230"/>
    </location>
</feature>
<feature type="cross-link" description="Glycyl lysine isopeptide (Lys-Gly) (interchain with G-Cter in SUMO)" evidence="6">
    <location>
        <position position="293"/>
    </location>
</feature>
<feature type="cross-link" description="Glycyl lysine isopeptide (Lys-Gly) (interchain with G-Cter in SUMO2)" evidence="23 25">
    <location>
        <position position="380"/>
    </location>
</feature>
<feature type="cross-link" description="Glycyl lysine isopeptide (Lys-Gly) (interchain with G-Cter in SUMO2)" evidence="22 23 24 25">
    <location>
        <position position="385"/>
    </location>
</feature>
<feature type="cross-link" description="Glycyl lysine isopeptide (Lys-Gly) (interchain with G-Cter in SUMO2)" evidence="22 25">
    <location>
        <position position="388"/>
    </location>
</feature>
<feature type="cross-link" description="Glycyl lysine isopeptide (Lys-Gly) (interchain with G-Cter in SUMO2)" evidence="22 23 24 25">
    <location>
        <position position="391"/>
    </location>
</feature>
<feature type="cross-link" description="Glycyl lysine isopeptide (Lys-Gly) (interchain with G-Cter in SUMO2)" evidence="22 23 24 25">
    <location>
        <position position="395"/>
    </location>
</feature>
<feature type="cross-link" description="Glycyl lysine isopeptide (Lys-Gly) (interchain with G-Cter in SUMO2)" evidence="22 23 24 25">
    <location>
        <position position="517"/>
    </location>
</feature>
<feature type="cross-link" description="Glycyl lysine isopeptide (Lys-Gly) (interchain with G-Cter in SUMO2)" evidence="23 25">
    <location>
        <position position="524"/>
    </location>
</feature>
<feature type="cross-link" description="Glycyl lysine isopeptide (Lys-Gly) (interchain with G-Cter in SUMO2)" evidence="25">
    <location>
        <position position="525"/>
    </location>
</feature>
<feature type="cross-link" description="Glycyl lysine isopeptide (Lys-Gly) (interchain with G-Cter in SUMO2)" evidence="22 23 24 25">
    <location>
        <position position="541"/>
    </location>
</feature>
<feature type="cross-link" description="Glycyl lysine isopeptide (Lys-Gly) (interchain with G-Cter in SUMO2)" evidence="25">
    <location>
        <position position="542"/>
    </location>
</feature>
<feature type="cross-link" description="Glycyl lysine isopeptide (Lys-Gly) (interchain with G-Cter in SUMO2)" evidence="22 23 24 25">
    <location>
        <position position="551"/>
    </location>
</feature>
<feature type="cross-link" description="Glycyl lysine isopeptide (Lys-Gly) (interchain with G-Cter in SUMO2)" evidence="23 25">
    <location>
        <position position="578"/>
    </location>
</feature>
<feature type="cross-link" description="Glycyl lysine isopeptide (Lys-Gly) (interchain with G-Cter in SUMO2)" evidence="23 25">
    <location>
        <position position="586"/>
    </location>
</feature>
<feature type="cross-link" description="Glycyl lysine isopeptide (Lys-Gly) (interchain with G-Cter in SUMO2)" evidence="25">
    <location>
        <position position="608"/>
    </location>
</feature>
<feature type="cross-link" description="Glycyl lysine isopeptide (Lys-Gly) (interchain with G-Cter in SUMO2); alternate" evidence="25">
    <location>
        <position position="616"/>
    </location>
</feature>
<feature type="splice variant" id="VSP_056404" description="In isoform 2." evidence="7">
    <original>LKMEEEGTEDNGLEDDSRDGQED</original>
    <variation>GHGSKSGEPAEYGHDGHECARRN</variation>
    <location>
        <begin position="93"/>
        <end position="115"/>
    </location>
</feature>
<feature type="splice variant" id="VSP_056405" description="In isoform 2." evidence="7">
    <location>
        <begin position="116"/>
        <end position="953"/>
    </location>
</feature>
<feature type="sequence conflict" description="In Ref. 4; AAH25279." evidence="8" ref="4">
    <original>K</original>
    <variation>M</variation>
    <location>
        <position position="528"/>
    </location>
</feature>
<gene>
    <name type="primary">SAFB2</name>
    <name type="synonym">KIAA0138</name>
</gene>
<sequence>MAETLPGSGDSGPGTASLGPGVAETGTRRLSELRVIDLRAELKKRNLDTGGNKSVLMERLKKAVKEEGQDPDEIGIELEATSKKSAKRCVKGLKMEEEGTEDNGLEDDSRDGQEDMEASLENLQNMGMMDMSVLDETEVANSSAPDFGEDGTDGLLDSFCDSKEYVAAQLRQLPAQPPEHAVDGEGFKNTLETSSLNFKVTPDIEESLLEPENEKILDILGETCKSEPVKEESSELEQPFAQDTSSVGPDRKLAEEEDLFDSAHPEEGDLDLASESTAHAQSSKADSLLAVVKREPAEQPGDGERTDCEPVGLEPAVEQSSAASELAEASSEELAEAPTEAPSPEARDSKEDGRKFDFDACNEVPPAPKESSTSEGADQKMSSFKEEKDIKPIIKDEKGRVGSGSGRNLWVSGLSSTTRATDLKNLFSKYGKVVGAKVVTNARSPGARCYGFVTMSTSDEATKCISHLHRTELHGRMISVEKAKNEPAGKKLSDRKECEVKKEKLSSVDRHHSVEIKIEKTVIKKEEKIEKKEEKKPEDIKKEEKDQDELKPGPTNRSRVTKSGSRGMERTVVMDKSKGEPVISVKTTSRSKERSSKSQDRKSESKEKRDILSFDKIKEQRERERQRQREREIRETERRREREQREREQRLEAFHERKEKARLQRERLQLECQRQRLERERMERERLERERMRVERERRKEQERIHREREELRRQQEQLRYEQERRPGRRPYDLDRRDDAYWPEGKRVAMEDRYRADFPRPDHRFHDFDHRDRGQYQDHAIDRREGSRPMMGDHRDGQHYGDDRHGHGGPPERHGRDSRDGWGGYGSDKRLSEGRGLPPPPRGGRDWGEHNQRLEEHQARAWQGAMDAGAASREHARWQGGERGLSGPSGPGHMASRGGVAGRGGFAQGGHSQGHVVPGGGLEGGGVASQDRGSRVPHPHPHPPPYPHFTRRY</sequence>
<protein>
    <recommendedName>
        <fullName>Scaffold attachment factor B2</fullName>
        <shortName>SAF-B2</shortName>
    </recommendedName>
</protein>